<comment type="function">
    <text evidence="1">NDH-1 shuttles electrons from an unknown electron donor, via FMN and iron-sulfur (Fe-S) centers, to quinones in the respiratory and/or the photosynthetic chain. The immediate electron acceptor for the enzyme in this species is believed to be plastoquinone. Couples the redox reaction to proton translocation, and thus conserves the redox energy in a proton gradient. Cyanobacterial NDH-1 also plays a role in inorganic carbon-concentration.</text>
</comment>
<comment type="catalytic activity">
    <reaction evidence="1">
        <text>a plastoquinone + NADH + (n+1) H(+)(in) = a plastoquinol + NAD(+) + n H(+)(out)</text>
        <dbReference type="Rhea" id="RHEA:42608"/>
        <dbReference type="Rhea" id="RHEA-COMP:9561"/>
        <dbReference type="Rhea" id="RHEA-COMP:9562"/>
        <dbReference type="ChEBI" id="CHEBI:15378"/>
        <dbReference type="ChEBI" id="CHEBI:17757"/>
        <dbReference type="ChEBI" id="CHEBI:57540"/>
        <dbReference type="ChEBI" id="CHEBI:57945"/>
        <dbReference type="ChEBI" id="CHEBI:62192"/>
    </reaction>
</comment>
<comment type="catalytic activity">
    <reaction evidence="1">
        <text>a plastoquinone + NADPH + (n+1) H(+)(in) = a plastoquinol + NADP(+) + n H(+)(out)</text>
        <dbReference type="Rhea" id="RHEA:42612"/>
        <dbReference type="Rhea" id="RHEA-COMP:9561"/>
        <dbReference type="Rhea" id="RHEA-COMP:9562"/>
        <dbReference type="ChEBI" id="CHEBI:15378"/>
        <dbReference type="ChEBI" id="CHEBI:17757"/>
        <dbReference type="ChEBI" id="CHEBI:57783"/>
        <dbReference type="ChEBI" id="CHEBI:58349"/>
        <dbReference type="ChEBI" id="CHEBI:62192"/>
    </reaction>
</comment>
<comment type="subunit">
    <text evidence="1">NDH-1 can be composed of about 15 different subunits; different subcomplexes with different compositions have been identified which probably have different functions.</text>
</comment>
<comment type="subcellular location">
    <subcellularLocation>
        <location evidence="1">Cellular thylakoid membrane</location>
        <topology evidence="1">Peripheral membrane protein</topology>
        <orientation evidence="1">Cytoplasmic side</orientation>
    </subcellularLocation>
</comment>
<comment type="similarity">
    <text evidence="1">Belongs to the complex I 30 kDa subunit family.</text>
</comment>
<comment type="sequence caution" evidence="2">
    <conflict type="erroneous initiation">
        <sequence resource="EMBL-CDS" id="AAC44354"/>
    </conflict>
</comment>
<sequence length="175" mass="19893">MADEELQPVPAAEAAIVPSGPTSQWLTENGFAHESLAADKNGVEIIKVEADFLLPIATALYAYGFNYLQFQGGVDLGPGQDLVSVYHLVKVSDNADKPEEIRVKVFLPRENPVVPSVYWIWKTADWQERESYDMFGIIYEGHPNLKRILMPEDWVGWPLRKDYISPDFYELQDAY</sequence>
<reference key="1">
    <citation type="submission" date="1998-10" db="EMBL/GenBank/DDBJ databases">
        <title>Isolation and characterisation of the ndhCKJ-cluster of the cyanobacteria Anabaena sp. PCC 7120.</title>
        <authorList>
            <person name="Happe T."/>
            <person name="Schiefer W."/>
            <person name="Boehme H."/>
        </authorList>
    </citation>
    <scope>NUCLEOTIDE SEQUENCE [GENOMIC DNA]</scope>
</reference>
<reference key="2">
    <citation type="journal article" date="2001" name="DNA Res.">
        <title>Complete genomic sequence of the filamentous nitrogen-fixing cyanobacterium Anabaena sp. strain PCC 7120.</title>
        <authorList>
            <person name="Kaneko T."/>
            <person name="Nakamura Y."/>
            <person name="Wolk C.P."/>
            <person name="Kuritz T."/>
            <person name="Sasamoto S."/>
            <person name="Watanabe A."/>
            <person name="Iriguchi M."/>
            <person name="Ishikawa A."/>
            <person name="Kawashima K."/>
            <person name="Kimura T."/>
            <person name="Kishida Y."/>
            <person name="Kohara M."/>
            <person name="Matsumoto M."/>
            <person name="Matsuno A."/>
            <person name="Muraki A."/>
            <person name="Nakazaki N."/>
            <person name="Shimpo S."/>
            <person name="Sugimoto M."/>
            <person name="Takazawa M."/>
            <person name="Yamada M."/>
            <person name="Yasuda M."/>
            <person name="Tabata S."/>
        </authorList>
    </citation>
    <scope>NUCLEOTIDE SEQUENCE [LARGE SCALE GENOMIC DNA]</scope>
    <source>
        <strain>PCC 7120 / SAG 25.82 / UTEX 2576</strain>
    </source>
</reference>
<reference key="3">
    <citation type="journal article" date="1996" name="Eur. J. Biochem.">
        <title>Cloning, analysis and inactivation of the ndhK gene encoding a subunit of NADH quinone oxidoreductase from Anabaena PCC 7120.</title>
        <authorList>
            <person name="Howitt C.A."/>
            <person name="Whelan J."/>
            <person name="Price G.D."/>
            <person name="Day D.A."/>
        </authorList>
    </citation>
    <scope>NUCLEOTIDE SEQUENCE [GENOMIC DNA] OF 1-155</scope>
</reference>
<feature type="chain" id="PRO_0000118665" description="NAD(P)H-quinone oxidoreductase subunit J">
    <location>
        <begin position="1"/>
        <end position="175"/>
    </location>
</feature>
<feature type="sequence conflict" description="In Ref. 3." evidence="2" ref="3">
    <original>Q</original>
    <variation>K</variation>
    <location>
        <position position="7"/>
    </location>
</feature>
<feature type="sequence conflict" description="In Ref. 3." evidence="2" ref="3">
    <original>EA</original>
    <variation>AE</variation>
    <location>
        <begin position="13"/>
        <end position="14"/>
    </location>
</feature>
<feature type="sequence conflict" description="In Ref. 3; AAC44354." evidence="2" ref="3">
    <original>A</original>
    <variation>P</variation>
    <location>
        <position position="50"/>
    </location>
</feature>
<feature type="sequence conflict" description="In Ref. 3; AAC44354." evidence="2" ref="3">
    <original>L</original>
    <variation>M</variation>
    <location>
        <position position="53"/>
    </location>
</feature>
<feature type="sequence conflict" description="In Ref. 3; AAC44354." evidence="2" ref="3">
    <original>V</original>
    <variation>I</variation>
    <location>
        <position position="74"/>
    </location>
</feature>
<feature type="sequence conflict" description="In Ref. 3; AAC44354." evidence="2" ref="3">
    <original>I</original>
    <variation>V</variation>
    <location>
        <position position="101"/>
    </location>
</feature>
<feature type="sequence conflict" description="In Ref. 3; AAC44354." evidence="2" ref="3">
    <original>E</original>
    <variation>G</variation>
    <location>
        <position position="152"/>
    </location>
</feature>
<proteinExistence type="inferred from homology"/>
<evidence type="ECO:0000255" key="1">
    <source>
        <dbReference type="HAMAP-Rule" id="MF_01357"/>
    </source>
</evidence>
<evidence type="ECO:0000305" key="2"/>
<name>NDHJ_NOSS1</name>
<organism>
    <name type="scientific">Nostoc sp. (strain PCC 7120 / SAG 25.82 / UTEX 2576)</name>
    <dbReference type="NCBI Taxonomy" id="103690"/>
    <lineage>
        <taxon>Bacteria</taxon>
        <taxon>Bacillati</taxon>
        <taxon>Cyanobacteriota</taxon>
        <taxon>Cyanophyceae</taxon>
        <taxon>Nostocales</taxon>
        <taxon>Nostocaceae</taxon>
        <taxon>Nostoc</taxon>
    </lineage>
</organism>
<protein>
    <recommendedName>
        <fullName evidence="1">NAD(P)H-quinone oxidoreductase subunit J</fullName>
        <ecNumber evidence="1">7.1.1.-</ecNumber>
    </recommendedName>
    <alternativeName>
        <fullName>NAD(P)H dehydrogenase subunit J</fullName>
    </alternativeName>
    <alternativeName>
        <fullName evidence="1">NADH-plastoquinone oxidoreductase subunit J</fullName>
    </alternativeName>
    <alternativeName>
        <fullName evidence="1">NDH-1 subunit J</fullName>
        <shortName evidence="1">NDH-J</shortName>
    </alternativeName>
</protein>
<dbReference type="EC" id="7.1.1.-" evidence="1"/>
<dbReference type="EMBL" id="AJ012180">
    <property type="protein sequence ID" value="CAB45641.1"/>
    <property type="molecule type" value="Genomic_DNA"/>
</dbReference>
<dbReference type="EMBL" id="BA000019">
    <property type="protein sequence ID" value="BAB75539.1"/>
    <property type="molecule type" value="Genomic_DNA"/>
</dbReference>
<dbReference type="EMBL" id="U31208">
    <property type="protein sequence ID" value="AAC44354.1"/>
    <property type="status" value="ALT_INIT"/>
    <property type="molecule type" value="Genomic_DNA"/>
</dbReference>
<dbReference type="PIR" id="AI2285">
    <property type="entry name" value="AI2285"/>
</dbReference>
<dbReference type="PIR" id="S74217">
    <property type="entry name" value="S74217"/>
</dbReference>
<dbReference type="RefSeq" id="WP_010997981.1">
    <property type="nucleotide sequence ID" value="NZ_RSCN01000011.1"/>
</dbReference>
<dbReference type="SMR" id="Q44241"/>
<dbReference type="STRING" id="103690.gene:10495882"/>
<dbReference type="KEGG" id="ana:all3840"/>
<dbReference type="eggNOG" id="COG0852">
    <property type="taxonomic scope" value="Bacteria"/>
</dbReference>
<dbReference type="OrthoDB" id="9803286at2"/>
<dbReference type="Proteomes" id="UP000002483">
    <property type="component" value="Chromosome"/>
</dbReference>
<dbReference type="GO" id="GO:0031676">
    <property type="term" value="C:plasma membrane-derived thylakoid membrane"/>
    <property type="evidence" value="ECO:0007669"/>
    <property type="project" value="UniProtKB-SubCell"/>
</dbReference>
<dbReference type="GO" id="GO:0008137">
    <property type="term" value="F:NADH dehydrogenase (ubiquinone) activity"/>
    <property type="evidence" value="ECO:0007669"/>
    <property type="project" value="InterPro"/>
</dbReference>
<dbReference type="GO" id="GO:0048038">
    <property type="term" value="F:quinone binding"/>
    <property type="evidence" value="ECO:0007669"/>
    <property type="project" value="UniProtKB-KW"/>
</dbReference>
<dbReference type="GO" id="GO:0019684">
    <property type="term" value="P:photosynthesis, light reaction"/>
    <property type="evidence" value="ECO:0007669"/>
    <property type="project" value="UniProtKB-UniRule"/>
</dbReference>
<dbReference type="Gene3D" id="3.30.460.80">
    <property type="entry name" value="NADH:ubiquinone oxidoreductase, 30kDa subunit"/>
    <property type="match status" value="1"/>
</dbReference>
<dbReference type="HAMAP" id="MF_01357">
    <property type="entry name" value="NDH1_NuoC"/>
    <property type="match status" value="1"/>
</dbReference>
<dbReference type="InterPro" id="IPR010218">
    <property type="entry name" value="NADH_DH_suC"/>
</dbReference>
<dbReference type="InterPro" id="IPR037232">
    <property type="entry name" value="NADH_quin_OxRdtase_su_C/D-like"/>
</dbReference>
<dbReference type="InterPro" id="IPR001268">
    <property type="entry name" value="NADH_UbQ_OxRdtase_30kDa_su"/>
</dbReference>
<dbReference type="InterPro" id="IPR020396">
    <property type="entry name" value="NADH_UbQ_OxRdtase_CS"/>
</dbReference>
<dbReference type="NCBIfam" id="TIGR01961">
    <property type="entry name" value="NuoC_fam"/>
    <property type="match status" value="1"/>
</dbReference>
<dbReference type="NCBIfam" id="NF009141">
    <property type="entry name" value="PRK12494.1"/>
    <property type="match status" value="1"/>
</dbReference>
<dbReference type="PANTHER" id="PTHR10884:SF14">
    <property type="entry name" value="NADH DEHYDROGENASE [UBIQUINONE] IRON-SULFUR PROTEIN 3, MITOCHONDRIAL"/>
    <property type="match status" value="1"/>
</dbReference>
<dbReference type="PANTHER" id="PTHR10884">
    <property type="entry name" value="NADH DEHYDROGENASE UBIQUINONE IRON-SULFUR PROTEIN 3"/>
    <property type="match status" value="1"/>
</dbReference>
<dbReference type="Pfam" id="PF00329">
    <property type="entry name" value="Complex1_30kDa"/>
    <property type="match status" value="1"/>
</dbReference>
<dbReference type="SUPFAM" id="SSF143243">
    <property type="entry name" value="Nqo5-like"/>
    <property type="match status" value="1"/>
</dbReference>
<dbReference type="PROSITE" id="PS00542">
    <property type="entry name" value="COMPLEX1_30K"/>
    <property type="match status" value="1"/>
</dbReference>
<keyword id="KW-0472">Membrane</keyword>
<keyword id="KW-0520">NAD</keyword>
<keyword id="KW-0521">NADP</keyword>
<keyword id="KW-0618">Plastoquinone</keyword>
<keyword id="KW-0874">Quinone</keyword>
<keyword id="KW-1185">Reference proteome</keyword>
<keyword id="KW-0793">Thylakoid</keyword>
<keyword id="KW-1278">Translocase</keyword>
<keyword id="KW-0813">Transport</keyword>
<gene>
    <name evidence="1" type="primary">ndhJ</name>
    <name type="ordered locus">all3840</name>
</gene>
<accession>Q44241</accession>
<accession>Q9WWN0</accession>